<proteinExistence type="inferred from homology"/>
<name>NUOK_MYCTA</name>
<accession>A5U7H1</accession>
<sequence length="99" mass="10858">MNPANYLYLSVLLFTIGASGVLLRRNAIVMFMCVELMLNAVNLAFVTFARMHGHLDAQMIAFFTMVVAACEVVVGLAIIMTIFRTRKSASVDDANLLKG</sequence>
<organism>
    <name type="scientific">Mycobacterium tuberculosis (strain ATCC 25177 / H37Ra)</name>
    <dbReference type="NCBI Taxonomy" id="419947"/>
    <lineage>
        <taxon>Bacteria</taxon>
        <taxon>Bacillati</taxon>
        <taxon>Actinomycetota</taxon>
        <taxon>Actinomycetes</taxon>
        <taxon>Mycobacteriales</taxon>
        <taxon>Mycobacteriaceae</taxon>
        <taxon>Mycobacterium</taxon>
        <taxon>Mycobacterium tuberculosis complex</taxon>
    </lineage>
</organism>
<protein>
    <recommendedName>
        <fullName evidence="1">NADH-quinone oxidoreductase subunit K</fullName>
        <ecNumber evidence="1">7.1.1.-</ecNumber>
    </recommendedName>
    <alternativeName>
        <fullName evidence="1">NADH dehydrogenase I subunit K</fullName>
    </alternativeName>
    <alternativeName>
        <fullName evidence="1">NDH-1 subunit K</fullName>
    </alternativeName>
</protein>
<reference key="1">
    <citation type="journal article" date="2008" name="PLoS ONE">
        <title>Genetic basis of virulence attenuation revealed by comparative genomic analysis of Mycobacterium tuberculosis strain H37Ra versus H37Rv.</title>
        <authorList>
            <person name="Zheng H."/>
            <person name="Lu L."/>
            <person name="Wang B."/>
            <person name="Pu S."/>
            <person name="Zhang X."/>
            <person name="Zhu G."/>
            <person name="Shi W."/>
            <person name="Zhang L."/>
            <person name="Wang H."/>
            <person name="Wang S."/>
            <person name="Zhao G."/>
            <person name="Zhang Y."/>
        </authorList>
    </citation>
    <scope>NUCLEOTIDE SEQUENCE [LARGE SCALE GENOMIC DNA]</scope>
    <source>
        <strain>ATCC 25177 / H37Ra</strain>
    </source>
</reference>
<keyword id="KW-1003">Cell membrane</keyword>
<keyword id="KW-0472">Membrane</keyword>
<keyword id="KW-0520">NAD</keyword>
<keyword id="KW-0874">Quinone</keyword>
<keyword id="KW-1185">Reference proteome</keyword>
<keyword id="KW-1278">Translocase</keyword>
<keyword id="KW-0812">Transmembrane</keyword>
<keyword id="KW-1133">Transmembrane helix</keyword>
<keyword id="KW-0813">Transport</keyword>
<comment type="function">
    <text evidence="1">NDH-1 shuttles electrons from NADH, via FMN and iron-sulfur (Fe-S) centers, to quinones in the respiratory chain. The immediate electron acceptor for the enzyme in this species is believed to be a menaquinone. Couples the redox reaction to proton translocation (for every two electrons transferred, four hydrogen ions are translocated across the cytoplasmic membrane), and thus conserves the redox energy in a proton gradient.</text>
</comment>
<comment type="catalytic activity">
    <reaction evidence="1">
        <text>a quinone + NADH + 5 H(+)(in) = a quinol + NAD(+) + 4 H(+)(out)</text>
        <dbReference type="Rhea" id="RHEA:57888"/>
        <dbReference type="ChEBI" id="CHEBI:15378"/>
        <dbReference type="ChEBI" id="CHEBI:24646"/>
        <dbReference type="ChEBI" id="CHEBI:57540"/>
        <dbReference type="ChEBI" id="CHEBI:57945"/>
        <dbReference type="ChEBI" id="CHEBI:132124"/>
    </reaction>
</comment>
<comment type="subunit">
    <text evidence="1">NDH-1 is composed of 14 different subunits. Subunits NuoA, H, J, K, L, M, N constitute the membrane sector of the complex.</text>
</comment>
<comment type="subcellular location">
    <subcellularLocation>
        <location evidence="1">Cell membrane</location>
        <topology evidence="1">Multi-pass membrane protein</topology>
    </subcellularLocation>
</comment>
<comment type="similarity">
    <text evidence="1">Belongs to the complex I subunit 4L family.</text>
</comment>
<evidence type="ECO:0000255" key="1">
    <source>
        <dbReference type="HAMAP-Rule" id="MF_01456"/>
    </source>
</evidence>
<feature type="chain" id="PRO_0000390135" description="NADH-quinone oxidoreductase subunit K">
    <location>
        <begin position="1"/>
        <end position="99"/>
    </location>
</feature>
<feature type="transmembrane region" description="Helical" evidence="1">
    <location>
        <begin position="3"/>
        <end position="23"/>
    </location>
</feature>
<feature type="transmembrane region" description="Helical" evidence="1">
    <location>
        <begin position="28"/>
        <end position="48"/>
    </location>
</feature>
<feature type="transmembrane region" description="Helical" evidence="1">
    <location>
        <begin position="59"/>
        <end position="79"/>
    </location>
</feature>
<gene>
    <name evidence="1" type="primary">nuoK</name>
    <name type="ordered locus">MRA_3188</name>
</gene>
<dbReference type="EC" id="7.1.1.-" evidence="1"/>
<dbReference type="EMBL" id="CP000611">
    <property type="protein sequence ID" value="ABQ74971.1"/>
    <property type="molecule type" value="Genomic_DNA"/>
</dbReference>
<dbReference type="RefSeq" id="WP_003416452.1">
    <property type="nucleotide sequence ID" value="NZ_CP016972.1"/>
</dbReference>
<dbReference type="SMR" id="A5U7H1"/>
<dbReference type="GeneID" id="45427142"/>
<dbReference type="KEGG" id="mra:MRA_3188"/>
<dbReference type="eggNOG" id="COG0713">
    <property type="taxonomic scope" value="Bacteria"/>
</dbReference>
<dbReference type="HOGENOM" id="CLU_144724_0_0_11"/>
<dbReference type="Proteomes" id="UP000001988">
    <property type="component" value="Chromosome"/>
</dbReference>
<dbReference type="GO" id="GO:0030964">
    <property type="term" value="C:NADH dehydrogenase complex"/>
    <property type="evidence" value="ECO:0007669"/>
    <property type="project" value="TreeGrafter"/>
</dbReference>
<dbReference type="GO" id="GO:0005886">
    <property type="term" value="C:plasma membrane"/>
    <property type="evidence" value="ECO:0007669"/>
    <property type="project" value="UniProtKB-SubCell"/>
</dbReference>
<dbReference type="GO" id="GO:0050136">
    <property type="term" value="F:NADH:ubiquinone reductase (non-electrogenic) activity"/>
    <property type="evidence" value="ECO:0007669"/>
    <property type="project" value="UniProtKB-UniRule"/>
</dbReference>
<dbReference type="GO" id="GO:0048038">
    <property type="term" value="F:quinone binding"/>
    <property type="evidence" value="ECO:0007669"/>
    <property type="project" value="UniProtKB-KW"/>
</dbReference>
<dbReference type="GO" id="GO:0042773">
    <property type="term" value="P:ATP synthesis coupled electron transport"/>
    <property type="evidence" value="ECO:0007669"/>
    <property type="project" value="InterPro"/>
</dbReference>
<dbReference type="FunFam" id="1.10.287.3510:FF:000001">
    <property type="entry name" value="NADH-quinone oxidoreductase subunit K"/>
    <property type="match status" value="1"/>
</dbReference>
<dbReference type="Gene3D" id="1.10.287.3510">
    <property type="match status" value="1"/>
</dbReference>
<dbReference type="HAMAP" id="MF_01456">
    <property type="entry name" value="NDH1_NuoK"/>
    <property type="match status" value="1"/>
</dbReference>
<dbReference type="InterPro" id="IPR001133">
    <property type="entry name" value="NADH_UbQ_OxRdtase_chain4L/K"/>
</dbReference>
<dbReference type="InterPro" id="IPR039428">
    <property type="entry name" value="NUOK/Mnh_C1-like"/>
</dbReference>
<dbReference type="NCBIfam" id="NF004320">
    <property type="entry name" value="PRK05715.1-2"/>
    <property type="match status" value="1"/>
</dbReference>
<dbReference type="PANTHER" id="PTHR11434:SF21">
    <property type="entry name" value="NADH DEHYDROGENASE SUBUNIT 4L-RELATED"/>
    <property type="match status" value="1"/>
</dbReference>
<dbReference type="PANTHER" id="PTHR11434">
    <property type="entry name" value="NADH-UBIQUINONE OXIDOREDUCTASE SUBUNIT ND4L"/>
    <property type="match status" value="1"/>
</dbReference>
<dbReference type="Pfam" id="PF00420">
    <property type="entry name" value="Oxidored_q2"/>
    <property type="match status" value="1"/>
</dbReference>